<protein>
    <recommendedName>
        <fullName>ATP-dependent RNA helicase DDX51</fullName>
        <ecNumber>3.6.4.13</ecNumber>
    </recommendedName>
    <alternativeName>
        <fullName>DEAD box protein 51</fullName>
    </alternativeName>
</protein>
<dbReference type="EC" id="3.6.4.13"/>
<dbReference type="EMBL" id="AY648772">
    <property type="protein sequence ID" value="AAT68090.1"/>
    <property type="molecule type" value="mRNA"/>
</dbReference>
<dbReference type="RefSeq" id="NP_001003864.1">
    <property type="nucleotide sequence ID" value="NM_001003864.1"/>
</dbReference>
<dbReference type="SMR" id="Q6DRI7"/>
<dbReference type="FunCoup" id="Q6DRI7">
    <property type="interactions" value="2837"/>
</dbReference>
<dbReference type="STRING" id="7955.ENSDARP00000029445"/>
<dbReference type="PaxDb" id="7955-ENSDARP00000029445"/>
<dbReference type="GeneID" id="445387"/>
<dbReference type="KEGG" id="dre:445387"/>
<dbReference type="AGR" id="ZFIN:ZDB-GENE-040927-28"/>
<dbReference type="CTD" id="317781"/>
<dbReference type="ZFIN" id="ZDB-GENE-040927-28">
    <property type="gene designation" value="ddx51"/>
</dbReference>
<dbReference type="eggNOG" id="KOG0350">
    <property type="taxonomic scope" value="Eukaryota"/>
</dbReference>
<dbReference type="InParanoid" id="Q6DRI7"/>
<dbReference type="OrthoDB" id="3370at2759"/>
<dbReference type="PhylomeDB" id="Q6DRI7"/>
<dbReference type="PRO" id="PR:Q6DRI7"/>
<dbReference type="Proteomes" id="UP000000437">
    <property type="component" value="Chromosome 8"/>
</dbReference>
<dbReference type="GO" id="GO:0005730">
    <property type="term" value="C:nucleolus"/>
    <property type="evidence" value="ECO:0007669"/>
    <property type="project" value="UniProtKB-SubCell"/>
</dbReference>
<dbReference type="GO" id="GO:0005634">
    <property type="term" value="C:nucleus"/>
    <property type="evidence" value="ECO:0000318"/>
    <property type="project" value="GO_Central"/>
</dbReference>
<dbReference type="GO" id="GO:0005524">
    <property type="term" value="F:ATP binding"/>
    <property type="evidence" value="ECO:0007669"/>
    <property type="project" value="UniProtKB-KW"/>
</dbReference>
<dbReference type="GO" id="GO:0016887">
    <property type="term" value="F:ATP hydrolysis activity"/>
    <property type="evidence" value="ECO:0007669"/>
    <property type="project" value="RHEA"/>
</dbReference>
<dbReference type="GO" id="GO:0003723">
    <property type="term" value="F:RNA binding"/>
    <property type="evidence" value="ECO:0007669"/>
    <property type="project" value="UniProtKB-KW"/>
</dbReference>
<dbReference type="GO" id="GO:0003724">
    <property type="term" value="F:RNA helicase activity"/>
    <property type="evidence" value="ECO:0007669"/>
    <property type="project" value="UniProtKB-EC"/>
</dbReference>
<dbReference type="GO" id="GO:0006364">
    <property type="term" value="P:rRNA processing"/>
    <property type="evidence" value="ECO:0007669"/>
    <property type="project" value="UniProtKB-KW"/>
</dbReference>
<dbReference type="CDD" id="cd17956">
    <property type="entry name" value="DEADc_DDX51"/>
    <property type="match status" value="1"/>
</dbReference>
<dbReference type="CDD" id="cd18787">
    <property type="entry name" value="SF2_C_DEAD"/>
    <property type="match status" value="1"/>
</dbReference>
<dbReference type="FunFam" id="3.40.50.300:FF:001539">
    <property type="entry name" value="ATP-dependent RNA helicase DDX51"/>
    <property type="match status" value="1"/>
</dbReference>
<dbReference type="Gene3D" id="3.40.50.300">
    <property type="entry name" value="P-loop containing nucleotide triphosphate hydrolases"/>
    <property type="match status" value="2"/>
</dbReference>
<dbReference type="InterPro" id="IPR011545">
    <property type="entry name" value="DEAD/DEAH_box_helicase_dom"/>
</dbReference>
<dbReference type="InterPro" id="IPR014001">
    <property type="entry name" value="Helicase_ATP-bd"/>
</dbReference>
<dbReference type="InterPro" id="IPR001650">
    <property type="entry name" value="Helicase_C-like"/>
</dbReference>
<dbReference type="InterPro" id="IPR027417">
    <property type="entry name" value="P-loop_NTPase"/>
</dbReference>
<dbReference type="InterPro" id="IPR000629">
    <property type="entry name" value="RNA-helicase_DEAD-box_CS"/>
</dbReference>
<dbReference type="PANTHER" id="PTHR24031">
    <property type="entry name" value="RNA HELICASE"/>
    <property type="match status" value="1"/>
</dbReference>
<dbReference type="Pfam" id="PF00270">
    <property type="entry name" value="DEAD"/>
    <property type="match status" value="1"/>
</dbReference>
<dbReference type="Pfam" id="PF00271">
    <property type="entry name" value="Helicase_C"/>
    <property type="match status" value="1"/>
</dbReference>
<dbReference type="SMART" id="SM00487">
    <property type="entry name" value="DEXDc"/>
    <property type="match status" value="1"/>
</dbReference>
<dbReference type="SMART" id="SM00490">
    <property type="entry name" value="HELICc"/>
    <property type="match status" value="1"/>
</dbReference>
<dbReference type="SUPFAM" id="SSF52540">
    <property type="entry name" value="P-loop containing nucleoside triphosphate hydrolases"/>
    <property type="match status" value="1"/>
</dbReference>
<dbReference type="PROSITE" id="PS00039">
    <property type="entry name" value="DEAD_ATP_HELICASE"/>
    <property type="match status" value="1"/>
</dbReference>
<dbReference type="PROSITE" id="PS51192">
    <property type="entry name" value="HELICASE_ATP_BIND_1"/>
    <property type="match status" value="1"/>
</dbReference>
<dbReference type="PROSITE" id="PS51194">
    <property type="entry name" value="HELICASE_CTER"/>
    <property type="match status" value="1"/>
</dbReference>
<keyword id="KW-0067">ATP-binding</keyword>
<keyword id="KW-0347">Helicase</keyword>
<keyword id="KW-0378">Hydrolase</keyword>
<keyword id="KW-0547">Nucleotide-binding</keyword>
<keyword id="KW-0539">Nucleus</keyword>
<keyword id="KW-1185">Reference proteome</keyword>
<keyword id="KW-0690">Ribosome biogenesis</keyword>
<keyword id="KW-0694">RNA-binding</keyword>
<keyword id="KW-0698">rRNA processing</keyword>
<reference key="1">
    <citation type="journal article" date="2004" name="Proc. Natl. Acad. Sci. U.S.A.">
        <title>Identification of 315 genes essential for early zebrafish development.</title>
        <authorList>
            <person name="Amsterdam A."/>
            <person name="Nissen R.M."/>
            <person name="Sun Z."/>
            <person name="Swindell E.C."/>
            <person name="Farrington S."/>
            <person name="Hopkins N."/>
        </authorList>
    </citation>
    <scope>NUCLEOTIDE SEQUENCE [LARGE SCALE MRNA]</scope>
</reference>
<organism>
    <name type="scientific">Danio rerio</name>
    <name type="common">Zebrafish</name>
    <name type="synonym">Brachydanio rerio</name>
    <dbReference type="NCBI Taxonomy" id="7955"/>
    <lineage>
        <taxon>Eukaryota</taxon>
        <taxon>Metazoa</taxon>
        <taxon>Chordata</taxon>
        <taxon>Craniata</taxon>
        <taxon>Vertebrata</taxon>
        <taxon>Euteleostomi</taxon>
        <taxon>Actinopterygii</taxon>
        <taxon>Neopterygii</taxon>
        <taxon>Teleostei</taxon>
        <taxon>Ostariophysi</taxon>
        <taxon>Cypriniformes</taxon>
        <taxon>Danionidae</taxon>
        <taxon>Danioninae</taxon>
        <taxon>Danio</taxon>
    </lineage>
</organism>
<name>DDX51_DANRE</name>
<evidence type="ECO:0000250" key="1"/>
<evidence type="ECO:0000255" key="2">
    <source>
        <dbReference type="PROSITE-ProRule" id="PRU00541"/>
    </source>
</evidence>
<evidence type="ECO:0000255" key="3">
    <source>
        <dbReference type="PROSITE-ProRule" id="PRU00542"/>
    </source>
</evidence>
<evidence type="ECO:0000256" key="4">
    <source>
        <dbReference type="SAM" id="MobiDB-lite"/>
    </source>
</evidence>
<evidence type="ECO:0000305" key="5"/>
<gene>
    <name type="primary">ddx51</name>
</gene>
<feature type="chain" id="PRO_0000228098" description="ATP-dependent RNA helicase DDX51">
    <location>
        <begin position="1"/>
        <end position="652"/>
    </location>
</feature>
<feature type="domain" description="Helicase ATP-binding" evidence="2">
    <location>
        <begin position="234"/>
        <end position="442"/>
    </location>
</feature>
<feature type="domain" description="Helicase C-terminal" evidence="3">
    <location>
        <begin position="480"/>
        <end position="626"/>
    </location>
</feature>
<feature type="region of interest" description="Disordered" evidence="4">
    <location>
        <begin position="1"/>
        <end position="145"/>
    </location>
</feature>
<feature type="short sequence motif" description="Q motif">
    <location>
        <begin position="212"/>
        <end position="220"/>
    </location>
</feature>
<feature type="short sequence motif" description="DEAD box">
    <location>
        <begin position="362"/>
        <end position="365"/>
    </location>
</feature>
<feature type="compositionally biased region" description="Low complexity" evidence="4">
    <location>
        <begin position="25"/>
        <end position="34"/>
    </location>
</feature>
<feature type="compositionally biased region" description="Basic and acidic residues" evidence="4">
    <location>
        <begin position="66"/>
        <end position="77"/>
    </location>
</feature>
<feature type="compositionally biased region" description="Basic and acidic residues" evidence="4">
    <location>
        <begin position="107"/>
        <end position="122"/>
    </location>
</feature>
<feature type="binding site" evidence="2">
    <location>
        <begin position="247"/>
        <end position="254"/>
    </location>
    <ligand>
        <name>ATP</name>
        <dbReference type="ChEBI" id="CHEBI:30616"/>
    </ligand>
</feature>
<sequence length="652" mass="72460">MALFTINRYLGEEEEEDSEKQSRSKALLAKLQKQVKARGQQSVSNTPKEEEEQQDDKEHKKRKHKLQETKGKIKKSESVQNTDPTEEADSSVKKKKKRKKSLSTEDVIVKIEENESENEKSVDITGPTPSSPVQFKAEKAEELTSSSQSNYQVLGGFKEKDVQKVKRVLPQWLSQPDVIQKDIKSNLIPISEVPGICPTLLRKLQTNGIQSFFPVQAEVIPAILESVGSGLLVGPGGYRPRDVCVSAPTGSGKTLAFVIPVVQALSKRVVRQVRALAVLPTKELAQQVSNVFSAYTEGSSLKVVMITGQKSFAAEQTALSEIRGGVSHSMADIVVATPGRLVDHINKNSSFSLQHLRFLIIDEADRMIDSMHQSWLSQVTKAVYSTPGETHTSVFRRTVPGPITAASLSPPQIPLQKLLFSATLTQNPEKLQLLDLHQPRLFSSTHSLTDNPAQSQDTFHFPQGLSEYYVPCTFSKKPLIILHFLLRLKFSPALCFTNSREGAHRLYLLVKLFGGVEVAEFSSKLSPGERQKTLKDFEKGKIPLLISTDAAARGIDINGVKCVINYDAPQYIRTYIHRVGRTARAGKAGLAFTFLLKVQEKRFLKMVSDAGSPGIQKQHVHPEALKSMESRYEQVLAELGTIVKEENEKKRF</sequence>
<proteinExistence type="evidence at transcript level"/>
<comment type="function">
    <text evidence="1">ATP-binding RNA helicase involved in the biogenesis of 60S ribosomal subunits.</text>
</comment>
<comment type="catalytic activity">
    <reaction>
        <text>ATP + H2O = ADP + phosphate + H(+)</text>
        <dbReference type="Rhea" id="RHEA:13065"/>
        <dbReference type="ChEBI" id="CHEBI:15377"/>
        <dbReference type="ChEBI" id="CHEBI:15378"/>
        <dbReference type="ChEBI" id="CHEBI:30616"/>
        <dbReference type="ChEBI" id="CHEBI:43474"/>
        <dbReference type="ChEBI" id="CHEBI:456216"/>
        <dbReference type="EC" id="3.6.4.13"/>
    </reaction>
</comment>
<comment type="subcellular location">
    <subcellularLocation>
        <location evidence="1">Nucleus</location>
        <location evidence="1">Nucleolus</location>
    </subcellularLocation>
</comment>
<comment type="domain">
    <text>The Q motif is unique to and characteristic of the DEAD box family of RNA helicases and controls ATP binding and hydrolysis.</text>
</comment>
<comment type="similarity">
    <text evidence="5">Belongs to the DEAD box helicase family. DDX51/DBP6 subfamily.</text>
</comment>
<accession>Q6DRI7</accession>